<proteinExistence type="inferred from homology"/>
<accession>O29001</accession>
<feature type="signal peptide" evidence="1">
    <location>
        <begin position="1"/>
        <end position="17"/>
    </location>
</feature>
<feature type="chain" id="PRO_0000013657" description="Uncharacterized protein AF_1267">
    <location>
        <begin position="18"/>
        <end position="40"/>
    </location>
</feature>
<reference key="1">
    <citation type="journal article" date="1997" name="Nature">
        <title>The complete genome sequence of the hyperthermophilic, sulphate-reducing archaeon Archaeoglobus fulgidus.</title>
        <authorList>
            <person name="Klenk H.-P."/>
            <person name="Clayton R.A."/>
            <person name="Tomb J.-F."/>
            <person name="White O."/>
            <person name="Nelson K.E."/>
            <person name="Ketchum K.A."/>
            <person name="Dodson R.J."/>
            <person name="Gwinn M.L."/>
            <person name="Hickey E.K."/>
            <person name="Peterson J.D."/>
            <person name="Richardson D.L."/>
            <person name="Kerlavage A.R."/>
            <person name="Graham D.E."/>
            <person name="Kyrpides N.C."/>
            <person name="Fleischmann R.D."/>
            <person name="Quackenbush J."/>
            <person name="Lee N.H."/>
            <person name="Sutton G.G."/>
            <person name="Gill S.R."/>
            <person name="Kirkness E.F."/>
            <person name="Dougherty B.A."/>
            <person name="McKenney K."/>
            <person name="Adams M.D."/>
            <person name="Loftus B.J."/>
            <person name="Peterson S.N."/>
            <person name="Reich C.I."/>
            <person name="McNeil L.K."/>
            <person name="Badger J.H."/>
            <person name="Glodek A."/>
            <person name="Zhou L."/>
            <person name="Overbeek R."/>
            <person name="Gocayne J.D."/>
            <person name="Weidman J.F."/>
            <person name="McDonald L.A."/>
            <person name="Utterback T.R."/>
            <person name="Cotton M.D."/>
            <person name="Spriggs T."/>
            <person name="Artiach P."/>
            <person name="Kaine B.P."/>
            <person name="Sykes S.M."/>
            <person name="Sadow P.W."/>
            <person name="D'Andrea K.P."/>
            <person name="Bowman C."/>
            <person name="Fujii C."/>
            <person name="Garland S.A."/>
            <person name="Mason T.M."/>
            <person name="Olsen G.J."/>
            <person name="Fraser C.M."/>
            <person name="Smith H.O."/>
            <person name="Woese C.R."/>
            <person name="Venter J.C."/>
        </authorList>
    </citation>
    <scope>NUCLEOTIDE SEQUENCE [LARGE SCALE GENOMIC DNA]</scope>
    <source>
        <strain>ATCC 49558 / DSM 4304 / JCM 9628 / NBRC 100126 / VC-16</strain>
    </source>
</reference>
<protein>
    <recommendedName>
        <fullName>Uncharacterized protein AF_1267</fullName>
    </recommendedName>
</protein>
<sequence length="40" mass="4306">MAVAALAMYGGTCGACAVLACNWNVRECGIIWKNLFEVKK</sequence>
<keyword id="KW-1185">Reference proteome</keyword>
<keyword id="KW-0732">Signal</keyword>
<dbReference type="EMBL" id="AE000782">
    <property type="protein sequence ID" value="AAB89992.1"/>
    <property type="molecule type" value="Genomic_DNA"/>
</dbReference>
<dbReference type="PIR" id="B69408">
    <property type="entry name" value="B69408"/>
</dbReference>
<dbReference type="PaxDb" id="224325-AF_1267"/>
<dbReference type="EnsemblBacteria" id="AAB89992">
    <property type="protein sequence ID" value="AAB89992"/>
    <property type="gene ID" value="AF_1267"/>
</dbReference>
<dbReference type="KEGG" id="afu:AF_1267"/>
<dbReference type="HOGENOM" id="CLU_3282647_0_0_2"/>
<dbReference type="Proteomes" id="UP000002199">
    <property type="component" value="Chromosome"/>
</dbReference>
<name>Y1267_ARCFU</name>
<gene>
    <name type="ordered locus">AF_1267</name>
</gene>
<organism>
    <name type="scientific">Archaeoglobus fulgidus (strain ATCC 49558 / DSM 4304 / JCM 9628 / NBRC 100126 / VC-16)</name>
    <dbReference type="NCBI Taxonomy" id="224325"/>
    <lineage>
        <taxon>Archaea</taxon>
        <taxon>Methanobacteriati</taxon>
        <taxon>Methanobacteriota</taxon>
        <taxon>Archaeoglobi</taxon>
        <taxon>Archaeoglobales</taxon>
        <taxon>Archaeoglobaceae</taxon>
        <taxon>Archaeoglobus</taxon>
    </lineage>
</organism>
<evidence type="ECO:0000255" key="1"/>